<protein>
    <recommendedName>
        <fullName>NADPH:adrenodoxin oxidoreductase, mitochondrial</fullName>
        <shortName>AR</shortName>
        <shortName>Adrenodoxin reductase</shortName>
        <ecNumber>1.18.1.6</ecNumber>
    </recommendedName>
    <alternativeName>
        <fullName>Ferredoxin--NADP(+) reductase</fullName>
        <shortName>Ferredoxin reductase</shortName>
    </alternativeName>
</protein>
<dbReference type="EC" id="1.18.1.6"/>
<dbReference type="EMBL" id="AF168685">
    <property type="protein sequence ID" value="AAD50819.1"/>
    <property type="molecule type" value="mRNA"/>
</dbReference>
<dbReference type="EMBL" id="AE013599">
    <property type="protein sequence ID" value="AAF58678.1"/>
    <property type="molecule type" value="Genomic_DNA"/>
</dbReference>
<dbReference type="RefSeq" id="NP_477150.1">
    <property type="nucleotide sequence ID" value="NM_057802.6"/>
</dbReference>
<dbReference type="SMR" id="Q9V3T9"/>
<dbReference type="BioGRID" id="61998">
    <property type="interactions" value="2"/>
</dbReference>
<dbReference type="FunCoup" id="Q9V3T9">
    <property type="interactions" value="1549"/>
</dbReference>
<dbReference type="STRING" id="7227.FBpp0087272"/>
<dbReference type="GlyGen" id="Q9V3T9">
    <property type="glycosylation" value="1 site"/>
</dbReference>
<dbReference type="PaxDb" id="7227-FBpp0087272"/>
<dbReference type="DNASU" id="36203"/>
<dbReference type="EnsemblMetazoa" id="FBtr0088176">
    <property type="protein sequence ID" value="FBpp0087272"/>
    <property type="gene ID" value="FBgn0015582"/>
</dbReference>
<dbReference type="GeneID" id="36203"/>
<dbReference type="KEGG" id="dme:Dmel_CG12390"/>
<dbReference type="AGR" id="FB:FBgn0015582"/>
<dbReference type="CTD" id="36203"/>
<dbReference type="FlyBase" id="FBgn0015582">
    <property type="gene designation" value="dare"/>
</dbReference>
<dbReference type="VEuPathDB" id="VectorBase:FBgn0015582"/>
<dbReference type="eggNOG" id="KOG1800">
    <property type="taxonomic scope" value="Eukaryota"/>
</dbReference>
<dbReference type="GeneTree" id="ENSGT00390000013574"/>
<dbReference type="HOGENOM" id="CLU_024722_3_1_1"/>
<dbReference type="InParanoid" id="Q9V3T9"/>
<dbReference type="OMA" id="RFNFIGN"/>
<dbReference type="OrthoDB" id="333024at2759"/>
<dbReference type="PhylomeDB" id="Q9V3T9"/>
<dbReference type="Reactome" id="R-DME-2395516">
    <property type="pathway name" value="Electron transport from NADPH to Ferredoxin"/>
</dbReference>
<dbReference type="UniPathway" id="UPA00296"/>
<dbReference type="BioGRID-ORCS" id="36203">
    <property type="hits" value="2 hits in 3 CRISPR screens"/>
</dbReference>
<dbReference type="GenomeRNAi" id="36203"/>
<dbReference type="PRO" id="PR:Q9V3T9"/>
<dbReference type="Proteomes" id="UP000000803">
    <property type="component" value="Chromosome 2R"/>
</dbReference>
<dbReference type="Bgee" id="FBgn0015582">
    <property type="expression patterns" value="Expressed in adult enteroendocrine precursor cell in adult midgut (Drosophila) and 62 other cell types or tissues"/>
</dbReference>
<dbReference type="ExpressionAtlas" id="Q9V3T9">
    <property type="expression patterns" value="baseline and differential"/>
</dbReference>
<dbReference type="GO" id="GO:0005743">
    <property type="term" value="C:mitochondrial inner membrane"/>
    <property type="evidence" value="ECO:0007669"/>
    <property type="project" value="UniProtKB-SubCell"/>
</dbReference>
<dbReference type="GO" id="GO:0005759">
    <property type="term" value="C:mitochondrial matrix"/>
    <property type="evidence" value="ECO:0000303"/>
    <property type="project" value="FlyBase"/>
</dbReference>
<dbReference type="GO" id="GO:0005739">
    <property type="term" value="C:mitochondrion"/>
    <property type="evidence" value="ECO:0000314"/>
    <property type="project" value="FlyBase"/>
</dbReference>
<dbReference type="GO" id="GO:0004324">
    <property type="term" value="F:ferredoxin-NADP+ reductase activity"/>
    <property type="evidence" value="ECO:0000250"/>
    <property type="project" value="FlyBase"/>
</dbReference>
<dbReference type="GO" id="GO:0008203">
    <property type="term" value="P:cholesterol metabolic process"/>
    <property type="evidence" value="ECO:0007669"/>
    <property type="project" value="UniProtKB-UniPathway"/>
</dbReference>
<dbReference type="GO" id="GO:0016226">
    <property type="term" value="P:iron-sulfur cluster assembly"/>
    <property type="evidence" value="ECO:0000303"/>
    <property type="project" value="FlyBase"/>
</dbReference>
<dbReference type="GO" id="GO:0007552">
    <property type="term" value="P:metamorphosis"/>
    <property type="evidence" value="ECO:0000315"/>
    <property type="project" value="FlyBase"/>
</dbReference>
<dbReference type="GO" id="GO:0006694">
    <property type="term" value="P:steroid biosynthetic process"/>
    <property type="evidence" value="ECO:0000314"/>
    <property type="project" value="FlyBase"/>
</dbReference>
<dbReference type="GO" id="GO:0006744">
    <property type="term" value="P:ubiquinone biosynthetic process"/>
    <property type="evidence" value="ECO:0000250"/>
    <property type="project" value="FlyBase"/>
</dbReference>
<dbReference type="FunFam" id="3.50.50.60:FF:000229">
    <property type="entry name" value="NADPH:adrenodoxin oxidoreductase, mitochondrial"/>
    <property type="match status" value="1"/>
</dbReference>
<dbReference type="Gene3D" id="3.50.50.60">
    <property type="entry name" value="FAD/NAD(P)-binding domain"/>
    <property type="match status" value="1"/>
</dbReference>
<dbReference type="Gene3D" id="3.40.50.720">
    <property type="entry name" value="NAD(P)-binding Rossmann-like Domain"/>
    <property type="match status" value="1"/>
</dbReference>
<dbReference type="InterPro" id="IPR036188">
    <property type="entry name" value="FAD/NAD-bd_sf"/>
</dbReference>
<dbReference type="InterPro" id="IPR055275">
    <property type="entry name" value="Ferredox_Rdtase"/>
</dbReference>
<dbReference type="InterPro" id="IPR021163">
    <property type="entry name" value="Ferredox_Rdtase_adrenod"/>
</dbReference>
<dbReference type="PANTHER" id="PTHR48467">
    <property type="entry name" value="GLUTAMATE SYNTHASE 1 [NADH], CHLOROPLASTIC-LIKE"/>
    <property type="match status" value="1"/>
</dbReference>
<dbReference type="PANTHER" id="PTHR48467:SF1">
    <property type="entry name" value="GLUTAMATE SYNTHASE 1 [NADH], CHLOROPLASTIC-LIKE"/>
    <property type="match status" value="1"/>
</dbReference>
<dbReference type="Pfam" id="PF13450">
    <property type="entry name" value="NAD_binding_8"/>
    <property type="match status" value="1"/>
</dbReference>
<dbReference type="PIRSF" id="PIRSF000362">
    <property type="entry name" value="FNR"/>
    <property type="match status" value="1"/>
</dbReference>
<dbReference type="PRINTS" id="PR00419">
    <property type="entry name" value="ADXRDTASE"/>
</dbReference>
<dbReference type="SUPFAM" id="SSF51971">
    <property type="entry name" value="Nucleotide-binding domain"/>
    <property type="match status" value="1"/>
</dbReference>
<proteinExistence type="evidence at transcript level"/>
<comment type="function">
    <text evidence="4">Required for synthesis of steroid hormones, for olfactory sensory behavior and completion of the second larval molt (a steroid mediated developmental transition) and pupariation.</text>
</comment>
<comment type="catalytic activity">
    <reaction>
        <text>2 reduced [adrenodoxin] + NADP(+) + H(+) = 2 oxidized [adrenodoxin] + NADPH</text>
        <dbReference type="Rhea" id="RHEA:42312"/>
        <dbReference type="Rhea" id="RHEA-COMP:9998"/>
        <dbReference type="Rhea" id="RHEA-COMP:9999"/>
        <dbReference type="ChEBI" id="CHEBI:15378"/>
        <dbReference type="ChEBI" id="CHEBI:33737"/>
        <dbReference type="ChEBI" id="CHEBI:33738"/>
        <dbReference type="ChEBI" id="CHEBI:57783"/>
        <dbReference type="ChEBI" id="CHEBI:58349"/>
        <dbReference type="EC" id="1.18.1.6"/>
    </reaction>
</comment>
<comment type="cofactor">
    <cofactor>
        <name>FAD</name>
        <dbReference type="ChEBI" id="CHEBI:57692"/>
    </cofactor>
</comment>
<comment type="pathway">
    <text>Steroid metabolism; cholesterol metabolism.</text>
</comment>
<comment type="subcellular location">
    <subcellularLocation>
        <location evidence="2">Mitochondrion inner membrane</location>
        <topology evidence="5">Peripheral membrane protein</topology>
    </subcellularLocation>
</comment>
<comment type="tissue specificity">
    <text evidence="4">Expressed predominantly in prothoracic gland of the larval ring gland and nurse cells of the adult ovary. Low expression is all adult tissues examined.</text>
</comment>
<comment type="similarity">
    <text evidence="5">Belongs to the ferredoxin--NADP reductase type 1 family.</text>
</comment>
<gene>
    <name type="primary">dare</name>
    <name type="ORF">CG12390</name>
</gene>
<keyword id="KW-0249">Electron transport</keyword>
<keyword id="KW-0274">FAD</keyword>
<keyword id="KW-0285">Flavoprotein</keyword>
<keyword id="KW-0472">Membrane</keyword>
<keyword id="KW-0496">Mitochondrion</keyword>
<keyword id="KW-0999">Mitochondrion inner membrane</keyword>
<keyword id="KW-0521">NADP</keyword>
<keyword id="KW-0560">Oxidoreductase</keyword>
<keyword id="KW-1185">Reference proteome</keyword>
<keyword id="KW-0809">Transit peptide</keyword>
<keyword id="KW-0813">Transport</keyword>
<feature type="transit peptide" description="Mitochondrion" evidence="3">
    <location>
        <begin position="1"/>
        <end status="unknown"/>
    </location>
</feature>
<feature type="chain" id="PRO_0000019424" description="NADPH:adrenodoxin oxidoreductase, mitochondrial">
    <location>
        <begin status="unknown"/>
        <end position="466"/>
    </location>
</feature>
<feature type="binding site">
    <location>
        <position position="40"/>
    </location>
    <ligand>
        <name>FAD</name>
        <dbReference type="ChEBI" id="CHEBI:57692"/>
    </ligand>
</feature>
<feature type="binding site">
    <location>
        <position position="61"/>
    </location>
    <ligand>
        <name>FAD</name>
        <dbReference type="ChEBI" id="CHEBI:57692"/>
    </ligand>
</feature>
<feature type="binding site">
    <location>
        <position position="69"/>
    </location>
    <ligand>
        <name>FAD</name>
        <dbReference type="ChEBI" id="CHEBI:57692"/>
    </ligand>
</feature>
<feature type="binding site">
    <location>
        <position position="105"/>
    </location>
    <ligand>
        <name>FAD</name>
        <dbReference type="ChEBI" id="CHEBI:57692"/>
    </ligand>
</feature>
<feature type="binding site" evidence="1">
    <location>
        <begin position="176"/>
        <end position="179"/>
    </location>
    <ligand>
        <name>NADP(+)</name>
        <dbReference type="ChEBI" id="CHEBI:58349"/>
    </ligand>
</feature>
<feature type="binding site" evidence="1">
    <location>
        <begin position="220"/>
        <end position="221"/>
    </location>
    <ligand>
        <name>NADP(+)</name>
        <dbReference type="ChEBI" id="CHEBI:58349"/>
    </ligand>
</feature>
<feature type="binding site" evidence="1">
    <location>
        <position position="232"/>
    </location>
    <ligand>
        <name>NADP(+)</name>
        <dbReference type="ChEBI" id="CHEBI:58349"/>
    </ligand>
</feature>
<feature type="binding site">
    <location>
        <position position="379"/>
    </location>
    <ligand>
        <name>FAD</name>
        <dbReference type="ChEBI" id="CHEBI:57692"/>
    </ligand>
</feature>
<feature type="binding site">
    <location>
        <begin position="386"/>
        <end position="388"/>
    </location>
    <ligand>
        <name>FAD</name>
        <dbReference type="ChEBI" id="CHEBI:57692"/>
    </ligand>
</feature>
<feature type="binding site" evidence="1">
    <location>
        <position position="386"/>
    </location>
    <ligand>
        <name>NADP(+)</name>
        <dbReference type="ChEBI" id="CHEBI:58349"/>
    </ligand>
</feature>
<sequence length="466" mass="51353">MGINCLNIFRRGLHTSSARLQVIQSTTPTKRICIVGAGPAGFYAAQLILKQLDNCVVDVVEKLPVPFGLVRFGVAPDHPEVKNVINTFTKTAEHPRLRYFGNISLGTDVSLRELRDRYHAVLLTYGADQDRQLELENEQLDNVISARKFVAWYNGLPGAENLAPDLSGRDVTIVGQGNVAVDVARMLLSPLDALKTTDTTEYALEALSCSQVERVHLVGRRGPLQAAFTIKELREMLKLPNVDTRWRTEDFSGIDMQLDKLQRPRKRLTELMLKSLKEQGRISGSKQFLPIFLRAPKAIAPGEMEFSVTELQQEAAVPTSSTERLPSHLILRSIGYKSSCVDTGINFDTRRGRVHNINGRILKDDATGEVDPGLYVAGWLGTGPTGVIVTTMNGAFAVAKTICDDINTNALDTSSVKPGYDADGKRVVTWDGWQRINDFESAAGKAKGKPREKIVSIEEMLRVAGV</sequence>
<organism>
    <name type="scientific">Drosophila melanogaster</name>
    <name type="common">Fruit fly</name>
    <dbReference type="NCBI Taxonomy" id="7227"/>
    <lineage>
        <taxon>Eukaryota</taxon>
        <taxon>Metazoa</taxon>
        <taxon>Ecdysozoa</taxon>
        <taxon>Arthropoda</taxon>
        <taxon>Hexapoda</taxon>
        <taxon>Insecta</taxon>
        <taxon>Pterygota</taxon>
        <taxon>Neoptera</taxon>
        <taxon>Endopterygota</taxon>
        <taxon>Diptera</taxon>
        <taxon>Brachycera</taxon>
        <taxon>Muscomorpha</taxon>
        <taxon>Ephydroidea</taxon>
        <taxon>Drosophilidae</taxon>
        <taxon>Drosophila</taxon>
        <taxon>Sophophora</taxon>
    </lineage>
</organism>
<evidence type="ECO:0000250" key="1">
    <source>
        <dbReference type="UniProtKB" id="P08165"/>
    </source>
</evidence>
<evidence type="ECO:0000250" key="2">
    <source>
        <dbReference type="UniProtKB" id="P48360"/>
    </source>
</evidence>
<evidence type="ECO:0000255" key="3"/>
<evidence type="ECO:0000269" key="4">
    <source>
    </source>
</evidence>
<evidence type="ECO:0000305" key="5"/>
<name>ADRO_DROME</name>
<reference key="1">
    <citation type="journal article" date="1999" name="Development">
        <title>The dare gene: steroid hormone production, olfactory behavior, and neural degeneration in Drosophila.</title>
        <authorList>
            <person name="Freeman M.R."/>
            <person name="Dobritsa A."/>
            <person name="Gaines P."/>
            <person name="Segraves W.A."/>
            <person name="Carlson J.R."/>
        </authorList>
    </citation>
    <scope>NUCLEOTIDE SEQUENCE [MRNA]</scope>
    <scope>FUNCTION</scope>
    <scope>TISSUE SPECIFICITY</scope>
    <source>
        <strain>W1118</strain>
        <tissue>Head</tissue>
        <tissue>Testis</tissue>
    </source>
</reference>
<reference key="2">
    <citation type="journal article" date="2000" name="Science">
        <title>The genome sequence of Drosophila melanogaster.</title>
        <authorList>
            <person name="Adams M.D."/>
            <person name="Celniker S.E."/>
            <person name="Holt R.A."/>
            <person name="Evans C.A."/>
            <person name="Gocayne J.D."/>
            <person name="Amanatides P.G."/>
            <person name="Scherer S.E."/>
            <person name="Li P.W."/>
            <person name="Hoskins R.A."/>
            <person name="Galle R.F."/>
            <person name="George R.A."/>
            <person name="Lewis S.E."/>
            <person name="Richards S."/>
            <person name="Ashburner M."/>
            <person name="Henderson S.N."/>
            <person name="Sutton G.G."/>
            <person name="Wortman J.R."/>
            <person name="Yandell M.D."/>
            <person name="Zhang Q."/>
            <person name="Chen L.X."/>
            <person name="Brandon R.C."/>
            <person name="Rogers Y.-H.C."/>
            <person name="Blazej R.G."/>
            <person name="Champe M."/>
            <person name="Pfeiffer B.D."/>
            <person name="Wan K.H."/>
            <person name="Doyle C."/>
            <person name="Baxter E.G."/>
            <person name="Helt G."/>
            <person name="Nelson C.R."/>
            <person name="Miklos G.L.G."/>
            <person name="Abril J.F."/>
            <person name="Agbayani A."/>
            <person name="An H.-J."/>
            <person name="Andrews-Pfannkoch C."/>
            <person name="Baldwin D."/>
            <person name="Ballew R.M."/>
            <person name="Basu A."/>
            <person name="Baxendale J."/>
            <person name="Bayraktaroglu L."/>
            <person name="Beasley E.M."/>
            <person name="Beeson K.Y."/>
            <person name="Benos P.V."/>
            <person name="Berman B.P."/>
            <person name="Bhandari D."/>
            <person name="Bolshakov S."/>
            <person name="Borkova D."/>
            <person name="Botchan M.R."/>
            <person name="Bouck J."/>
            <person name="Brokstein P."/>
            <person name="Brottier P."/>
            <person name="Burtis K.C."/>
            <person name="Busam D.A."/>
            <person name="Butler H."/>
            <person name="Cadieu E."/>
            <person name="Center A."/>
            <person name="Chandra I."/>
            <person name="Cherry J.M."/>
            <person name="Cawley S."/>
            <person name="Dahlke C."/>
            <person name="Davenport L.B."/>
            <person name="Davies P."/>
            <person name="de Pablos B."/>
            <person name="Delcher A."/>
            <person name="Deng Z."/>
            <person name="Mays A.D."/>
            <person name="Dew I."/>
            <person name="Dietz S.M."/>
            <person name="Dodson K."/>
            <person name="Doup L.E."/>
            <person name="Downes M."/>
            <person name="Dugan-Rocha S."/>
            <person name="Dunkov B.C."/>
            <person name="Dunn P."/>
            <person name="Durbin K.J."/>
            <person name="Evangelista C.C."/>
            <person name="Ferraz C."/>
            <person name="Ferriera S."/>
            <person name="Fleischmann W."/>
            <person name="Fosler C."/>
            <person name="Gabrielian A.E."/>
            <person name="Garg N.S."/>
            <person name="Gelbart W.M."/>
            <person name="Glasser K."/>
            <person name="Glodek A."/>
            <person name="Gong F."/>
            <person name="Gorrell J.H."/>
            <person name="Gu Z."/>
            <person name="Guan P."/>
            <person name="Harris M."/>
            <person name="Harris N.L."/>
            <person name="Harvey D.A."/>
            <person name="Heiman T.J."/>
            <person name="Hernandez J.R."/>
            <person name="Houck J."/>
            <person name="Hostin D."/>
            <person name="Houston K.A."/>
            <person name="Howland T.J."/>
            <person name="Wei M.-H."/>
            <person name="Ibegwam C."/>
            <person name="Jalali M."/>
            <person name="Kalush F."/>
            <person name="Karpen G.H."/>
            <person name="Ke Z."/>
            <person name="Kennison J.A."/>
            <person name="Ketchum K.A."/>
            <person name="Kimmel B.E."/>
            <person name="Kodira C.D."/>
            <person name="Kraft C.L."/>
            <person name="Kravitz S."/>
            <person name="Kulp D."/>
            <person name="Lai Z."/>
            <person name="Lasko P."/>
            <person name="Lei Y."/>
            <person name="Levitsky A.A."/>
            <person name="Li J.H."/>
            <person name="Li Z."/>
            <person name="Liang Y."/>
            <person name="Lin X."/>
            <person name="Liu X."/>
            <person name="Mattei B."/>
            <person name="McIntosh T.C."/>
            <person name="McLeod M.P."/>
            <person name="McPherson D."/>
            <person name="Merkulov G."/>
            <person name="Milshina N.V."/>
            <person name="Mobarry C."/>
            <person name="Morris J."/>
            <person name="Moshrefi A."/>
            <person name="Mount S.M."/>
            <person name="Moy M."/>
            <person name="Murphy B."/>
            <person name="Murphy L."/>
            <person name="Muzny D.M."/>
            <person name="Nelson D.L."/>
            <person name="Nelson D.R."/>
            <person name="Nelson K.A."/>
            <person name="Nixon K."/>
            <person name="Nusskern D.R."/>
            <person name="Pacleb J.M."/>
            <person name="Palazzolo M."/>
            <person name="Pittman G.S."/>
            <person name="Pan S."/>
            <person name="Pollard J."/>
            <person name="Puri V."/>
            <person name="Reese M.G."/>
            <person name="Reinert K."/>
            <person name="Remington K."/>
            <person name="Saunders R.D.C."/>
            <person name="Scheeler F."/>
            <person name="Shen H."/>
            <person name="Shue B.C."/>
            <person name="Siden-Kiamos I."/>
            <person name="Simpson M."/>
            <person name="Skupski M.P."/>
            <person name="Smith T.J."/>
            <person name="Spier E."/>
            <person name="Spradling A.C."/>
            <person name="Stapleton M."/>
            <person name="Strong R."/>
            <person name="Sun E."/>
            <person name="Svirskas R."/>
            <person name="Tector C."/>
            <person name="Turner R."/>
            <person name="Venter E."/>
            <person name="Wang A.H."/>
            <person name="Wang X."/>
            <person name="Wang Z.-Y."/>
            <person name="Wassarman D.A."/>
            <person name="Weinstock G.M."/>
            <person name="Weissenbach J."/>
            <person name="Williams S.M."/>
            <person name="Woodage T."/>
            <person name="Worley K.C."/>
            <person name="Wu D."/>
            <person name="Yang S."/>
            <person name="Yao Q.A."/>
            <person name="Ye J."/>
            <person name="Yeh R.-F."/>
            <person name="Zaveri J.S."/>
            <person name="Zhan M."/>
            <person name="Zhang G."/>
            <person name="Zhao Q."/>
            <person name="Zheng L."/>
            <person name="Zheng X.H."/>
            <person name="Zhong F.N."/>
            <person name="Zhong W."/>
            <person name="Zhou X."/>
            <person name="Zhu S.C."/>
            <person name="Zhu X."/>
            <person name="Smith H.O."/>
            <person name="Gibbs R.A."/>
            <person name="Myers E.W."/>
            <person name="Rubin G.M."/>
            <person name="Venter J.C."/>
        </authorList>
    </citation>
    <scope>NUCLEOTIDE SEQUENCE [LARGE SCALE GENOMIC DNA]</scope>
    <source>
        <strain>Berkeley</strain>
    </source>
</reference>
<reference key="3">
    <citation type="journal article" date="2002" name="Genome Biol.">
        <title>Annotation of the Drosophila melanogaster euchromatic genome: a systematic review.</title>
        <authorList>
            <person name="Misra S."/>
            <person name="Crosby M.A."/>
            <person name="Mungall C.J."/>
            <person name="Matthews B.B."/>
            <person name="Campbell K.S."/>
            <person name="Hradecky P."/>
            <person name="Huang Y."/>
            <person name="Kaminker J.S."/>
            <person name="Millburn G.H."/>
            <person name="Prochnik S.E."/>
            <person name="Smith C.D."/>
            <person name="Tupy J.L."/>
            <person name="Whitfield E.J."/>
            <person name="Bayraktaroglu L."/>
            <person name="Berman B.P."/>
            <person name="Bettencourt B.R."/>
            <person name="Celniker S.E."/>
            <person name="de Grey A.D.N.J."/>
            <person name="Drysdale R.A."/>
            <person name="Harris N.L."/>
            <person name="Richter J."/>
            <person name="Russo S."/>
            <person name="Schroeder A.J."/>
            <person name="Shu S.Q."/>
            <person name="Stapleton M."/>
            <person name="Yamada C."/>
            <person name="Ashburner M."/>
            <person name="Gelbart W.M."/>
            <person name="Rubin G.M."/>
            <person name="Lewis S.E."/>
        </authorList>
    </citation>
    <scope>GENOME REANNOTATION</scope>
    <source>
        <strain>Berkeley</strain>
    </source>
</reference>
<accession>Q9V3T9</accession>